<protein>
    <recommendedName>
        <fullName evidence="1">Fructose-1,6-bisphosphatase class 1</fullName>
        <shortName evidence="1">FBPase class 1</shortName>
        <ecNumber evidence="1">3.1.3.11</ecNumber>
    </recommendedName>
    <alternativeName>
        <fullName evidence="1">D-fructose-1,6-bisphosphate 1-phosphohydrolase class 1</fullName>
    </alternativeName>
</protein>
<feature type="chain" id="PRO_0000364471" description="Fructose-1,6-bisphosphatase class 1">
    <location>
        <begin position="1"/>
        <end position="342"/>
    </location>
</feature>
<feature type="binding site" evidence="1">
    <location>
        <position position="91"/>
    </location>
    <ligand>
        <name>Mg(2+)</name>
        <dbReference type="ChEBI" id="CHEBI:18420"/>
        <label>1</label>
    </ligand>
</feature>
<feature type="binding site" evidence="1">
    <location>
        <position position="113"/>
    </location>
    <ligand>
        <name>Mg(2+)</name>
        <dbReference type="ChEBI" id="CHEBI:18420"/>
        <label>1</label>
    </ligand>
</feature>
<feature type="binding site" evidence="1">
    <location>
        <position position="113"/>
    </location>
    <ligand>
        <name>Mg(2+)</name>
        <dbReference type="ChEBI" id="CHEBI:18420"/>
        <label>2</label>
    </ligand>
</feature>
<feature type="binding site" evidence="1">
    <location>
        <position position="115"/>
    </location>
    <ligand>
        <name>Mg(2+)</name>
        <dbReference type="ChEBI" id="CHEBI:18420"/>
        <label>1</label>
    </ligand>
</feature>
<feature type="binding site" evidence="1">
    <location>
        <begin position="116"/>
        <end position="119"/>
    </location>
    <ligand>
        <name>substrate</name>
    </ligand>
</feature>
<feature type="binding site" evidence="1">
    <location>
        <position position="116"/>
    </location>
    <ligand>
        <name>Mg(2+)</name>
        <dbReference type="ChEBI" id="CHEBI:18420"/>
        <label>2</label>
    </ligand>
</feature>
<feature type="binding site" evidence="1">
    <location>
        <position position="211"/>
    </location>
    <ligand>
        <name>substrate</name>
    </ligand>
</feature>
<feature type="binding site" evidence="1">
    <location>
        <position position="277"/>
    </location>
    <ligand>
        <name>substrate</name>
    </ligand>
</feature>
<feature type="binding site" evidence="1">
    <location>
        <position position="283"/>
    </location>
    <ligand>
        <name>Mg(2+)</name>
        <dbReference type="ChEBI" id="CHEBI:18420"/>
        <label>2</label>
    </ligand>
</feature>
<comment type="catalytic activity">
    <reaction evidence="1">
        <text>beta-D-fructose 1,6-bisphosphate + H2O = beta-D-fructose 6-phosphate + phosphate</text>
        <dbReference type="Rhea" id="RHEA:11064"/>
        <dbReference type="ChEBI" id="CHEBI:15377"/>
        <dbReference type="ChEBI" id="CHEBI:32966"/>
        <dbReference type="ChEBI" id="CHEBI:43474"/>
        <dbReference type="ChEBI" id="CHEBI:57634"/>
        <dbReference type="EC" id="3.1.3.11"/>
    </reaction>
</comment>
<comment type="cofactor">
    <cofactor evidence="1">
        <name>Mg(2+)</name>
        <dbReference type="ChEBI" id="CHEBI:18420"/>
    </cofactor>
    <text evidence="1">Binds 2 magnesium ions per subunit.</text>
</comment>
<comment type="pathway">
    <text evidence="1">Carbohydrate biosynthesis; gluconeogenesis.</text>
</comment>
<comment type="subunit">
    <text evidence="1">Homotetramer.</text>
</comment>
<comment type="subcellular location">
    <subcellularLocation>
        <location evidence="1">Cytoplasm</location>
    </subcellularLocation>
</comment>
<comment type="similarity">
    <text evidence="1">Belongs to the FBPase class 1 family.</text>
</comment>
<sequence>MKRKTLTQYLVEQQRSANALGPEVRLLIEVVARACKAISHAVSKGALGGVLGSLESENVQGEVQKKLDVLSNEILLEANEWGGHLAAMASEEMETIHLIPNRYPKGEYLLLFDPLDGSSNIDVNVSIGTIFSVLHAPHRVAGAEEVCEQDFLQPGSQQVAAGYAVYGPQTMLVLTIGTGVVGFTLDREMGSWVLTHENMRVPEDTKEFAINMSNMRHWAPPVRRYIDECLAGTTGPLGKDYNMRWIASMVADVHRIMTRGGIFMYPWDAREPGKAGKLRLMYEANPMSMIIEQAGGAAIDGTRRILDIQPDKLHQRVSVILGSKNEVERVGRYHAEAAQAPA</sequence>
<organism>
    <name type="scientific">Bordetella petrii (strain ATCC BAA-461 / DSM 12804 / CCUG 43448)</name>
    <dbReference type="NCBI Taxonomy" id="340100"/>
    <lineage>
        <taxon>Bacteria</taxon>
        <taxon>Pseudomonadati</taxon>
        <taxon>Pseudomonadota</taxon>
        <taxon>Betaproteobacteria</taxon>
        <taxon>Burkholderiales</taxon>
        <taxon>Alcaligenaceae</taxon>
        <taxon>Bordetella</taxon>
    </lineage>
</organism>
<evidence type="ECO:0000255" key="1">
    <source>
        <dbReference type="HAMAP-Rule" id="MF_01855"/>
    </source>
</evidence>
<reference key="1">
    <citation type="journal article" date="2008" name="BMC Genomics">
        <title>The missing link: Bordetella petrii is endowed with both the metabolic versatility of environmental bacteria and virulence traits of pathogenic Bordetellae.</title>
        <authorList>
            <person name="Gross R."/>
            <person name="Guzman C.A."/>
            <person name="Sebaihia M."/>
            <person name="Martin dos Santos V.A.P."/>
            <person name="Pieper D.H."/>
            <person name="Koebnik R."/>
            <person name="Lechner M."/>
            <person name="Bartels D."/>
            <person name="Buhrmester J."/>
            <person name="Choudhuri J.V."/>
            <person name="Ebensen T."/>
            <person name="Gaigalat L."/>
            <person name="Herrmann S."/>
            <person name="Khachane A.N."/>
            <person name="Larisch C."/>
            <person name="Link S."/>
            <person name="Linke B."/>
            <person name="Meyer F."/>
            <person name="Mormann S."/>
            <person name="Nakunst D."/>
            <person name="Rueckert C."/>
            <person name="Schneiker-Bekel S."/>
            <person name="Schulze K."/>
            <person name="Voerholter F.-J."/>
            <person name="Yevsa T."/>
            <person name="Engle J.T."/>
            <person name="Goldman W.E."/>
            <person name="Puehler A."/>
            <person name="Goebel U.B."/>
            <person name="Goesmann A."/>
            <person name="Bloecker H."/>
            <person name="Kaiser O."/>
            <person name="Martinez-Arias R."/>
        </authorList>
    </citation>
    <scope>NUCLEOTIDE SEQUENCE [LARGE SCALE GENOMIC DNA]</scope>
    <source>
        <strain>ATCC BAA-461 / DSM 12804 / CCUG 43448</strain>
    </source>
</reference>
<name>F16PA_BORPD</name>
<dbReference type="EC" id="3.1.3.11" evidence="1"/>
<dbReference type="EMBL" id="AM902716">
    <property type="protein sequence ID" value="CAP43086.1"/>
    <property type="molecule type" value="Genomic_DNA"/>
</dbReference>
<dbReference type="SMR" id="A9IQQ8"/>
<dbReference type="STRING" id="94624.Bpet2744"/>
<dbReference type="KEGG" id="bpt:Bpet2744"/>
<dbReference type="eggNOG" id="COG0158">
    <property type="taxonomic scope" value="Bacteria"/>
</dbReference>
<dbReference type="UniPathway" id="UPA00138"/>
<dbReference type="Proteomes" id="UP000001225">
    <property type="component" value="Chromosome"/>
</dbReference>
<dbReference type="GO" id="GO:0005829">
    <property type="term" value="C:cytosol"/>
    <property type="evidence" value="ECO:0007669"/>
    <property type="project" value="TreeGrafter"/>
</dbReference>
<dbReference type="GO" id="GO:0042132">
    <property type="term" value="F:fructose 1,6-bisphosphate 1-phosphatase activity"/>
    <property type="evidence" value="ECO:0007669"/>
    <property type="project" value="UniProtKB-UniRule"/>
</dbReference>
<dbReference type="GO" id="GO:0000287">
    <property type="term" value="F:magnesium ion binding"/>
    <property type="evidence" value="ECO:0007669"/>
    <property type="project" value="UniProtKB-UniRule"/>
</dbReference>
<dbReference type="GO" id="GO:0030388">
    <property type="term" value="P:fructose 1,6-bisphosphate metabolic process"/>
    <property type="evidence" value="ECO:0007669"/>
    <property type="project" value="TreeGrafter"/>
</dbReference>
<dbReference type="GO" id="GO:0006002">
    <property type="term" value="P:fructose 6-phosphate metabolic process"/>
    <property type="evidence" value="ECO:0007669"/>
    <property type="project" value="TreeGrafter"/>
</dbReference>
<dbReference type="GO" id="GO:0006000">
    <property type="term" value="P:fructose metabolic process"/>
    <property type="evidence" value="ECO:0007669"/>
    <property type="project" value="TreeGrafter"/>
</dbReference>
<dbReference type="GO" id="GO:0006094">
    <property type="term" value="P:gluconeogenesis"/>
    <property type="evidence" value="ECO:0007669"/>
    <property type="project" value="UniProtKB-UniRule"/>
</dbReference>
<dbReference type="GO" id="GO:0005986">
    <property type="term" value="P:sucrose biosynthetic process"/>
    <property type="evidence" value="ECO:0007669"/>
    <property type="project" value="TreeGrafter"/>
</dbReference>
<dbReference type="CDD" id="cd00354">
    <property type="entry name" value="FBPase"/>
    <property type="match status" value="1"/>
</dbReference>
<dbReference type="FunFam" id="3.30.540.10:FF:000006">
    <property type="entry name" value="Fructose-1,6-bisphosphatase class 1"/>
    <property type="match status" value="1"/>
</dbReference>
<dbReference type="FunFam" id="3.40.190.80:FF:000011">
    <property type="entry name" value="Fructose-1,6-bisphosphatase class 1"/>
    <property type="match status" value="1"/>
</dbReference>
<dbReference type="Gene3D" id="3.40.190.80">
    <property type="match status" value="1"/>
</dbReference>
<dbReference type="Gene3D" id="3.30.540.10">
    <property type="entry name" value="Fructose-1,6-Bisphosphatase, subunit A, domain 1"/>
    <property type="match status" value="1"/>
</dbReference>
<dbReference type="HAMAP" id="MF_01855">
    <property type="entry name" value="FBPase_class1"/>
    <property type="match status" value="1"/>
</dbReference>
<dbReference type="InterPro" id="IPR044015">
    <property type="entry name" value="FBPase_C_dom"/>
</dbReference>
<dbReference type="InterPro" id="IPR000146">
    <property type="entry name" value="FBPase_class-1"/>
</dbReference>
<dbReference type="InterPro" id="IPR033391">
    <property type="entry name" value="FBPase_N"/>
</dbReference>
<dbReference type="InterPro" id="IPR028343">
    <property type="entry name" value="FBPtase"/>
</dbReference>
<dbReference type="NCBIfam" id="NF006778">
    <property type="entry name" value="PRK09293.1-1"/>
    <property type="match status" value="1"/>
</dbReference>
<dbReference type="NCBIfam" id="NF006779">
    <property type="entry name" value="PRK09293.1-3"/>
    <property type="match status" value="1"/>
</dbReference>
<dbReference type="NCBIfam" id="NF006780">
    <property type="entry name" value="PRK09293.1-4"/>
    <property type="match status" value="1"/>
</dbReference>
<dbReference type="PANTHER" id="PTHR11556">
    <property type="entry name" value="FRUCTOSE-1,6-BISPHOSPHATASE-RELATED"/>
    <property type="match status" value="1"/>
</dbReference>
<dbReference type="PANTHER" id="PTHR11556:SF35">
    <property type="entry name" value="SEDOHEPTULOSE-1,7-BISPHOSPHATASE, CHLOROPLASTIC"/>
    <property type="match status" value="1"/>
</dbReference>
<dbReference type="Pfam" id="PF00316">
    <property type="entry name" value="FBPase"/>
    <property type="match status" value="1"/>
</dbReference>
<dbReference type="Pfam" id="PF18913">
    <property type="entry name" value="FBPase_C"/>
    <property type="match status" value="1"/>
</dbReference>
<dbReference type="PIRSF" id="PIRSF500210">
    <property type="entry name" value="FBPtase"/>
    <property type="match status" value="1"/>
</dbReference>
<dbReference type="PIRSF" id="PIRSF000904">
    <property type="entry name" value="FBPtase_SBPase"/>
    <property type="match status" value="1"/>
</dbReference>
<dbReference type="PRINTS" id="PR00115">
    <property type="entry name" value="F16BPHPHTASE"/>
</dbReference>
<dbReference type="SUPFAM" id="SSF56655">
    <property type="entry name" value="Carbohydrate phosphatase"/>
    <property type="match status" value="1"/>
</dbReference>
<accession>A9IQQ8</accession>
<gene>
    <name evidence="1" type="primary">fbp</name>
    <name type="ordered locus">Bpet2744</name>
</gene>
<proteinExistence type="inferred from homology"/>
<keyword id="KW-0119">Carbohydrate metabolism</keyword>
<keyword id="KW-0963">Cytoplasm</keyword>
<keyword id="KW-0378">Hydrolase</keyword>
<keyword id="KW-0460">Magnesium</keyword>
<keyword id="KW-0479">Metal-binding</keyword>